<accession>Q49A88</accession>
<accession>B7Z2Q3</accession>
<accession>B7Z2T2</accession>
<accession>B8ZZ41</accession>
<accession>B8ZZ58</accession>
<accession>D3DN98</accession>
<accession>Q7Z3N3</accession>
<accession>Q86T30</accession>
<accession>Q8IWF8</accession>
<accession>Q8WUJ8</accession>
<accession>Q96K47</accession>
<accession>Q9H9A3</accession>
<accession>Q9UFH0</accession>
<comment type="function">
    <text evidence="6 7">Negatively regulates centriole duplication. Negatively regulates CEP63 and CDK2 centrosomal localization.</text>
</comment>
<comment type="subunit">
    <text evidence="6">Interacts with CEP63.</text>
</comment>
<comment type="interaction">
    <interactant intactId="EBI-751035">
        <id>Q49A88</id>
    </interactant>
    <interactant intactId="EBI-741977">
        <id>Q96MT8</id>
        <label>CEP63</label>
    </interactant>
    <organismsDiffer>false</organismsDiffer>
    <experiments>5</experiments>
</comment>
<comment type="interaction">
    <interactant intactId="EBI-751035">
        <id>Q49A88</id>
    </interactant>
    <interactant intactId="EBI-10178634">
        <id>P43364-2</id>
        <label>MAGEA11</label>
    </interactant>
    <organismsDiffer>false</organismsDiffer>
    <experiments>3</experiments>
</comment>
<comment type="interaction">
    <interactant intactId="EBI-751035">
        <id>Q49A88</id>
    </interactant>
    <interactant intactId="EBI-741421">
        <id>Q15154</id>
        <label>PCM1</label>
    </interactant>
    <organismsDiffer>false</organismsDiffer>
    <experiments>6</experiments>
</comment>
<comment type="interaction">
    <interactant intactId="EBI-751035">
        <id>Q49A88</id>
    </interactant>
    <interactant intactId="EBI-597835">
        <id>P50542</id>
        <label>PEX5</label>
    </interactant>
    <organismsDiffer>false</organismsDiffer>
    <experiments>3</experiments>
</comment>
<comment type="interaction">
    <interactant intactId="EBI-12105646">
        <id>Q49A88-3</id>
    </interactant>
    <interactant intactId="EBI-11522539">
        <id>Q96MT8-3</id>
        <label>CEP63</label>
    </interactant>
    <organismsDiffer>false</organismsDiffer>
    <experiments>3</experiments>
</comment>
<comment type="interaction">
    <interactant intactId="EBI-12105646">
        <id>Q49A88-3</id>
    </interactant>
    <interactant intactId="EBI-751621">
        <id>P48730</id>
        <label>CSNK1D</label>
    </interactant>
    <organismsDiffer>false</organismsDiffer>
    <experiments>3</experiments>
</comment>
<comment type="interaction">
    <interactant intactId="EBI-12105646">
        <id>Q49A88-3</id>
    </interactant>
    <interactant intactId="EBI-351257">
        <id>P26196</id>
        <label>DDX6</label>
    </interactant>
    <organismsDiffer>false</organismsDiffer>
    <experiments>3</experiments>
</comment>
<comment type="interaction">
    <interactant intactId="EBI-12105646">
        <id>Q49A88-3</id>
    </interactant>
    <interactant intactId="EBI-351506">
        <id>P06396</id>
        <label>GSN</label>
    </interactant>
    <organismsDiffer>false</organismsDiffer>
    <experiments>3</experiments>
</comment>
<comment type="interaction">
    <interactant intactId="EBI-12105646">
        <id>Q49A88-3</id>
    </interactant>
    <interactant intactId="EBI-350145">
        <id>P01112</id>
        <label>HRAS</label>
    </interactant>
    <organismsDiffer>false</organismsDiffer>
    <experiments>3</experiments>
</comment>
<comment type="interaction">
    <interactant intactId="EBI-12105646">
        <id>Q49A88-3</id>
    </interactant>
    <interactant intactId="EBI-710124">
        <id>O60341</id>
        <label>KDM1A</label>
    </interactant>
    <organismsDiffer>false</organismsDiffer>
    <experiments>3</experiments>
</comment>
<comment type="interaction">
    <interactant intactId="EBI-12105646">
        <id>Q49A88-3</id>
    </interactant>
    <interactant intactId="EBI-739552">
        <id>P43364</id>
        <label>MAGEA11</label>
    </interactant>
    <organismsDiffer>false</organismsDiffer>
    <experiments>3</experiments>
</comment>
<comment type="interaction">
    <interactant intactId="EBI-12105646">
        <id>Q49A88-3</id>
    </interactant>
    <interactant intactId="EBI-751857">
        <id>O15481</id>
        <label>MAGEB4</label>
    </interactant>
    <organismsDiffer>false</organismsDiffer>
    <experiments>3</experiments>
</comment>
<comment type="interaction">
    <interactant intactId="EBI-12105646">
        <id>Q49A88-3</id>
    </interactant>
    <interactant intactId="EBI-1045072">
        <id>Q96T60</id>
        <label>PNKP</label>
    </interactant>
    <organismsDiffer>false</organismsDiffer>
    <experiments>3</experiments>
</comment>
<comment type="interaction">
    <interactant intactId="EBI-12105646">
        <id>Q49A88-3</id>
    </interactant>
    <interactant intactId="EBI-373337">
        <id>O76064</id>
        <label>RNF8</label>
    </interactant>
    <organismsDiffer>false</organismsDiffer>
    <experiments>3</experiments>
</comment>
<comment type="interaction">
    <interactant intactId="EBI-12105646">
        <id>Q49A88-3</id>
    </interactant>
    <interactant intactId="EBI-6116822">
        <id>Q8N3L3</id>
        <label>TXLNB</label>
    </interactant>
    <organismsDiffer>false</organismsDiffer>
    <experiments>3</experiments>
</comment>
<comment type="subcellular location">
    <subcellularLocation>
        <location evidence="6 7">Cytoplasm</location>
        <location evidence="6 7">Cytoskeleton</location>
        <location evidence="6 7">Microtubule organizing center</location>
        <location evidence="6 7">Centrosome</location>
        <location evidence="6 7">Centriolar satellite</location>
    </subcellularLocation>
    <text evidence="7">Colocalizes with PCM1 at centriolar satellites throughout the cell cycle.</text>
</comment>
<comment type="alternative products">
    <event type="alternative splicing"/>
    <isoform>
        <id>Q49A88-1</id>
        <name>1</name>
        <sequence type="displayed"/>
    </isoform>
    <isoform>
        <id>Q49A88-2</id>
        <name>2</name>
        <sequence type="described" ref="VSP_033455"/>
    </isoform>
    <isoform>
        <id>Q49A88-3</id>
        <name>3</name>
        <sequence type="described" ref="VSP_033456 VSP_033457"/>
    </isoform>
    <isoform>
        <id>Q49A88-4</id>
        <name>4</name>
        <sequence type="described" ref="VSP_033455 VSP_033459 VSP_033460"/>
    </isoform>
    <isoform>
        <id>Q49A88-5</id>
        <name>5</name>
        <sequence type="described" ref="VSP_033458"/>
    </isoform>
    <isoform>
        <id>Q49A88-6</id>
        <name>6</name>
        <sequence type="described" ref="VSP_039080"/>
    </isoform>
</comment>
<comment type="sequence caution" evidence="11">
    <conflict type="erroneous initiation">
        <sequence resource="EMBL-CDS" id="BAB14329"/>
    </conflict>
    <text>Truncated N-terminus.</text>
</comment>
<comment type="sequence caution" evidence="11">
    <conflict type="erroneous initiation">
        <sequence resource="EMBL-CDS" id="BAB55229"/>
    </conflict>
    <text>Truncated N-terminus.</text>
</comment>
<comment type="sequence caution" evidence="11">
    <conflict type="erroneous initiation">
        <sequence resource="EMBL-CDS" id="BAH11939"/>
    </conflict>
    <text>Truncated N-terminus.</text>
</comment>
<feature type="chain" id="PRO_0000333043" description="Coiled-coil domain-containing protein 14">
    <location>
        <begin position="1"/>
        <end position="953"/>
    </location>
</feature>
<feature type="region of interest" description="Disordered" evidence="2">
    <location>
        <begin position="1"/>
        <end position="22"/>
    </location>
</feature>
<feature type="region of interest" description="Disordered" evidence="2">
    <location>
        <begin position="52"/>
        <end position="72"/>
    </location>
</feature>
<feature type="region of interest" description="Disordered" evidence="2">
    <location>
        <begin position="126"/>
        <end position="189"/>
    </location>
</feature>
<feature type="region of interest" description="Disordered" evidence="2">
    <location>
        <begin position="268"/>
        <end position="287"/>
    </location>
</feature>
<feature type="coiled-coil region" evidence="1">
    <location>
        <begin position="383"/>
        <end position="413"/>
    </location>
</feature>
<feature type="coiled-coil region" evidence="1">
    <location>
        <begin position="483"/>
        <end position="618"/>
    </location>
</feature>
<feature type="compositionally biased region" description="Basic residues" evidence="2">
    <location>
        <begin position="1"/>
        <end position="21"/>
    </location>
</feature>
<feature type="compositionally biased region" description="Basic residues" evidence="2">
    <location>
        <begin position="145"/>
        <end position="154"/>
    </location>
</feature>
<feature type="compositionally biased region" description="Basic and acidic residues" evidence="2">
    <location>
        <begin position="169"/>
        <end position="187"/>
    </location>
</feature>
<feature type="compositionally biased region" description="Polar residues" evidence="2">
    <location>
        <begin position="277"/>
        <end position="287"/>
    </location>
</feature>
<feature type="modified residue" description="Phosphoserine" evidence="12">
    <location>
        <position position="124"/>
    </location>
</feature>
<feature type="modified residue" description="Phosphoserine" evidence="12">
    <location>
        <position position="670"/>
    </location>
</feature>
<feature type="modified residue" description="Phosphoserine" evidence="12">
    <location>
        <position position="754"/>
    </location>
</feature>
<feature type="modified residue" description="Phosphoserine" evidence="12">
    <location>
        <position position="798"/>
    </location>
</feature>
<feature type="splice variant" id="VSP_033455" description="In isoform 2 and isoform 4." evidence="9 10">
    <location>
        <begin position="1"/>
        <end position="200"/>
    </location>
</feature>
<feature type="splice variant" id="VSP_033456" description="In isoform 3." evidence="10">
    <location>
        <begin position="1"/>
        <end position="160"/>
    </location>
</feature>
<feature type="splice variant" id="VSP_039080" description="In isoform 6." evidence="8">
    <original>GSETAYLENRSNSRPLESKRYGSKKKRHEKHTIPLVVQKETS</original>
    <variation>A</variation>
    <location>
        <begin position="125"/>
        <end position="166"/>
    </location>
</feature>
<feature type="splice variant" id="VSP_033457" description="In isoform 3." evidence="10">
    <original>VQKETS</original>
    <variation>MPMESA</variation>
    <location>
        <begin position="161"/>
        <end position="166"/>
    </location>
</feature>
<feature type="splice variant" id="VSP_033458" description="In isoform 5." evidence="8">
    <location>
        <begin position="290"/>
        <end position="448"/>
    </location>
</feature>
<feature type="splice variant" id="VSP_033459" description="In isoform 4." evidence="10">
    <original>TLQTSMAKLLSDLS</original>
    <variation>KQKMHLKNFPEHLI</variation>
    <location>
        <begin position="642"/>
        <end position="655"/>
    </location>
</feature>
<feature type="splice variant" id="VSP_033460" description="In isoform 4." evidence="10">
    <location>
        <begin position="656"/>
        <end position="953"/>
    </location>
</feature>
<feature type="sequence variant" id="VAR_043116" description="In dbSNP:rs17310144." evidence="3 4 5">
    <original>T</original>
    <variation>P</variation>
    <location>
        <position position="365"/>
    </location>
</feature>
<feature type="sequence conflict" description="In Ref. 2; BAH11939." evidence="11" ref="2">
    <original>K</original>
    <variation>E</variation>
    <location>
        <position position="154"/>
    </location>
</feature>
<feature type="sequence conflict" description="In Ref. 1; CAD97804." evidence="11" ref="1">
    <original>K</original>
    <variation>R</variation>
    <location>
        <position position="403"/>
    </location>
</feature>
<feature type="sequence conflict" description="In Ref. 5; AAH42613." evidence="11" ref="5">
    <original>I</original>
    <variation>T</variation>
    <location>
        <position position="580"/>
    </location>
</feature>
<feature type="sequence conflict" description="In Ref. 2; BAH11968." evidence="11" ref="2">
    <original>Q</original>
    <variation>H</variation>
    <location>
        <position position="585"/>
    </location>
</feature>
<feature type="sequence conflict" description="In Ref. 2; BAH11968." evidence="11" ref="2">
    <original>S</original>
    <variation>P</variation>
    <location>
        <position position="689"/>
    </location>
</feature>
<feature type="sequence conflict" description="In Ref. 5; AAH42613." evidence="11" ref="5">
    <original>K</original>
    <variation>E</variation>
    <location>
        <position position="790"/>
    </location>
</feature>
<feature type="sequence conflict" description="In Ref. 2; BAB14329." evidence="11" ref="2">
    <original>K</original>
    <variation>E</variation>
    <location>
        <position position="821"/>
    </location>
</feature>
<feature type="sequence conflict" description="In Ref. 5; AAH42613." evidence="11" ref="5">
    <original>C</original>
    <variation>G</variation>
    <location>
        <position position="886"/>
    </location>
</feature>
<evidence type="ECO:0000255" key="1"/>
<evidence type="ECO:0000256" key="2">
    <source>
        <dbReference type="SAM" id="MobiDB-lite"/>
    </source>
</evidence>
<evidence type="ECO:0000269" key="3">
    <source>
    </source>
</evidence>
<evidence type="ECO:0000269" key="4">
    <source>
    </source>
</evidence>
<evidence type="ECO:0000269" key="5">
    <source>
    </source>
</evidence>
<evidence type="ECO:0000269" key="6">
    <source>
    </source>
</evidence>
<evidence type="ECO:0000269" key="7">
    <source>
    </source>
</evidence>
<evidence type="ECO:0000303" key="8">
    <source>
    </source>
</evidence>
<evidence type="ECO:0000303" key="9">
    <source>
    </source>
</evidence>
<evidence type="ECO:0000303" key="10">
    <source>
    </source>
</evidence>
<evidence type="ECO:0000305" key="11"/>
<evidence type="ECO:0007744" key="12">
    <source>
    </source>
</evidence>
<proteinExistence type="evidence at protein level"/>
<dbReference type="EMBL" id="BX537652">
    <property type="protein sequence ID" value="CAD97804.1"/>
    <property type="molecule type" value="mRNA"/>
</dbReference>
<dbReference type="EMBL" id="AL122079">
    <property type="protein sequence ID" value="CAB59254.1"/>
    <property type="molecule type" value="mRNA"/>
</dbReference>
<dbReference type="EMBL" id="AL833312">
    <property type="protein sequence ID" value="CAD91162.1"/>
    <property type="molecule type" value="mRNA"/>
</dbReference>
<dbReference type="EMBL" id="AK022954">
    <property type="protein sequence ID" value="BAB14329.1"/>
    <property type="status" value="ALT_INIT"/>
    <property type="molecule type" value="mRNA"/>
</dbReference>
<dbReference type="EMBL" id="AK027607">
    <property type="protein sequence ID" value="BAB55229.1"/>
    <property type="status" value="ALT_INIT"/>
    <property type="molecule type" value="mRNA"/>
</dbReference>
<dbReference type="EMBL" id="AK294979">
    <property type="protein sequence ID" value="BAH11939.1"/>
    <property type="status" value="ALT_INIT"/>
    <property type="molecule type" value="mRNA"/>
</dbReference>
<dbReference type="EMBL" id="AK295091">
    <property type="protein sequence ID" value="BAH11968.1"/>
    <property type="molecule type" value="mRNA"/>
</dbReference>
<dbReference type="EMBL" id="AC117381">
    <property type="status" value="NOT_ANNOTATED_CDS"/>
    <property type="molecule type" value="Genomic_DNA"/>
</dbReference>
<dbReference type="EMBL" id="CH471052">
    <property type="protein sequence ID" value="EAW79430.1"/>
    <property type="molecule type" value="Genomic_DNA"/>
</dbReference>
<dbReference type="EMBL" id="CH471052">
    <property type="protein sequence ID" value="EAW79434.1"/>
    <property type="molecule type" value="Genomic_DNA"/>
</dbReference>
<dbReference type="EMBL" id="BC020246">
    <property type="protein sequence ID" value="AAH20246.1"/>
    <property type="molecule type" value="mRNA"/>
</dbReference>
<dbReference type="EMBL" id="BC040285">
    <property type="protein sequence ID" value="AAH40285.1"/>
    <property type="molecule type" value="mRNA"/>
</dbReference>
<dbReference type="EMBL" id="BC042613">
    <property type="protein sequence ID" value="AAH42613.1"/>
    <property type="molecule type" value="mRNA"/>
</dbReference>
<dbReference type="CCDS" id="CCDS77806.1">
    <molecule id="Q49A88-2"/>
</dbReference>
<dbReference type="RefSeq" id="NP_001295246.1">
    <molecule id="Q49A88-2"/>
    <property type="nucleotide sequence ID" value="NM_001308317.2"/>
</dbReference>
<dbReference type="RefSeq" id="NP_001353265.1">
    <molecule id="Q49A88-2"/>
    <property type="nucleotide sequence ID" value="NM_001366336.1"/>
</dbReference>
<dbReference type="RefSeq" id="NP_001353266.1">
    <molecule id="Q49A88-2"/>
    <property type="nucleotide sequence ID" value="NM_001366337.1"/>
</dbReference>
<dbReference type="RefSeq" id="NP_073594.4">
    <property type="nucleotide sequence ID" value="NM_022757.4"/>
</dbReference>
<dbReference type="RefSeq" id="XP_005247767.1">
    <property type="nucleotide sequence ID" value="XM_005247710.4"/>
</dbReference>
<dbReference type="RefSeq" id="XP_005247768.1">
    <property type="nucleotide sequence ID" value="XM_005247711.4"/>
</dbReference>
<dbReference type="RefSeq" id="XP_005247770.1">
    <molecule id="Q49A88-2"/>
    <property type="nucleotide sequence ID" value="XM_005247713.3"/>
</dbReference>
<dbReference type="RefSeq" id="XP_005247771.1">
    <property type="nucleotide sequence ID" value="XM_005247714.2"/>
</dbReference>
<dbReference type="RefSeq" id="XP_016862545.1">
    <property type="nucleotide sequence ID" value="XM_017007056.1"/>
</dbReference>
<dbReference type="RefSeq" id="XP_016862547.1">
    <property type="nucleotide sequence ID" value="XM_017007058.1"/>
</dbReference>
<dbReference type="RefSeq" id="XP_016862548.1">
    <property type="nucleotide sequence ID" value="XM_017007059.1"/>
</dbReference>
<dbReference type="RefSeq" id="XP_047304696.1">
    <molecule id="Q49A88-3"/>
    <property type="nucleotide sequence ID" value="XM_047448740.1"/>
</dbReference>
<dbReference type="RefSeq" id="XP_047304697.1">
    <molecule id="Q49A88-3"/>
    <property type="nucleotide sequence ID" value="XM_047448741.1"/>
</dbReference>
<dbReference type="RefSeq" id="XP_047304698.1">
    <molecule id="Q49A88-3"/>
    <property type="nucleotide sequence ID" value="XM_047448742.1"/>
</dbReference>
<dbReference type="RefSeq" id="XP_047304699.1">
    <molecule id="Q49A88-3"/>
    <property type="nucleotide sequence ID" value="XM_047448743.1"/>
</dbReference>
<dbReference type="RefSeq" id="XP_047304700.1">
    <molecule id="Q49A88-3"/>
    <property type="nucleotide sequence ID" value="XM_047448744.1"/>
</dbReference>
<dbReference type="RefSeq" id="XP_047304701.1">
    <molecule id="Q49A88-3"/>
    <property type="nucleotide sequence ID" value="XM_047448745.1"/>
</dbReference>
<dbReference type="RefSeq" id="XP_047304702.1">
    <molecule id="Q49A88-3"/>
    <property type="nucleotide sequence ID" value="XM_047448746.1"/>
</dbReference>
<dbReference type="SMR" id="Q49A88"/>
<dbReference type="BioGRID" id="122281">
    <property type="interactions" value="141"/>
</dbReference>
<dbReference type="DIP" id="DIP-47727N"/>
<dbReference type="FunCoup" id="Q49A88">
    <property type="interactions" value="954"/>
</dbReference>
<dbReference type="IntAct" id="Q49A88">
    <property type="interactions" value="78"/>
</dbReference>
<dbReference type="MINT" id="Q49A88"/>
<dbReference type="STRING" id="9606.ENSP00000420180"/>
<dbReference type="GlyGen" id="Q49A88">
    <property type="glycosylation" value="2 sites, 1 O-linked glycan (2 sites)"/>
</dbReference>
<dbReference type="iPTMnet" id="Q49A88"/>
<dbReference type="PhosphoSitePlus" id="Q49A88"/>
<dbReference type="BioMuta" id="CCDC14"/>
<dbReference type="DMDM" id="296439419"/>
<dbReference type="jPOST" id="Q49A88"/>
<dbReference type="MassIVE" id="Q49A88"/>
<dbReference type="PaxDb" id="9606-ENSP00000420180"/>
<dbReference type="PeptideAtlas" id="Q49A88"/>
<dbReference type="ProteomicsDB" id="62026">
    <molecule id="Q49A88-1"/>
</dbReference>
<dbReference type="ProteomicsDB" id="62027">
    <molecule id="Q49A88-2"/>
</dbReference>
<dbReference type="ProteomicsDB" id="62028">
    <molecule id="Q49A88-3"/>
</dbReference>
<dbReference type="ProteomicsDB" id="62029">
    <molecule id="Q49A88-4"/>
</dbReference>
<dbReference type="ProteomicsDB" id="62030">
    <molecule id="Q49A88-5"/>
</dbReference>
<dbReference type="ProteomicsDB" id="62031">
    <molecule id="Q49A88-6"/>
</dbReference>
<dbReference type="Pumba" id="Q49A88"/>
<dbReference type="Antibodypedia" id="32961">
    <property type="antibodies" value="52 antibodies from 15 providers"/>
</dbReference>
<dbReference type="DNASU" id="64770"/>
<dbReference type="Ensembl" id="ENST00000485727.5">
    <molecule id="Q49A88-2"/>
    <property type="protein sequence ID" value="ENSP00000418002.1"/>
    <property type="gene ID" value="ENSG00000175455.16"/>
</dbReference>
<dbReference type="Ensembl" id="ENST00000488653.6">
    <molecule id="Q49A88-6"/>
    <property type="protein sequence ID" value="ENSP00000420180.3"/>
    <property type="gene ID" value="ENSG00000175455.16"/>
</dbReference>
<dbReference type="Ensembl" id="ENST00000489746.5">
    <molecule id="Q49A88-2"/>
    <property type="protein sequence ID" value="ENSP00000418403.1"/>
    <property type="gene ID" value="ENSG00000175455.16"/>
</dbReference>
<dbReference type="GeneID" id="64770"/>
<dbReference type="KEGG" id="hsa:64770"/>
<dbReference type="UCSC" id="uc003egx.5">
    <molecule id="Q49A88-1"/>
    <property type="organism name" value="human"/>
</dbReference>
<dbReference type="AGR" id="HGNC:25766"/>
<dbReference type="CTD" id="64770"/>
<dbReference type="DisGeNET" id="64770"/>
<dbReference type="GeneCards" id="CCDC14"/>
<dbReference type="HGNC" id="HGNC:25766">
    <property type="gene designation" value="CCDC14"/>
</dbReference>
<dbReference type="HPA" id="ENSG00000175455">
    <property type="expression patterns" value="Low tissue specificity"/>
</dbReference>
<dbReference type="MIM" id="617147">
    <property type="type" value="gene"/>
</dbReference>
<dbReference type="neXtProt" id="NX_Q49A88"/>
<dbReference type="OpenTargets" id="ENSG00000175455"/>
<dbReference type="PharmGKB" id="PA134990564"/>
<dbReference type="VEuPathDB" id="HostDB:ENSG00000175455"/>
<dbReference type="eggNOG" id="ENOG502R84N">
    <property type="taxonomic scope" value="Eukaryota"/>
</dbReference>
<dbReference type="GeneTree" id="ENSGT00390000017916"/>
<dbReference type="HOGENOM" id="CLU_015403_0_0_1"/>
<dbReference type="InParanoid" id="Q49A88"/>
<dbReference type="OMA" id="GTHIRKI"/>
<dbReference type="OrthoDB" id="10014807at2759"/>
<dbReference type="PAN-GO" id="Q49A88">
    <property type="GO annotations" value="2 GO annotations based on evolutionary models"/>
</dbReference>
<dbReference type="PhylomeDB" id="Q49A88"/>
<dbReference type="TreeFam" id="TF332390"/>
<dbReference type="PathwayCommons" id="Q49A88"/>
<dbReference type="SignaLink" id="Q49A88"/>
<dbReference type="BioGRID-ORCS" id="64770">
    <property type="hits" value="12 hits in 1157 CRISPR screens"/>
</dbReference>
<dbReference type="ChiTaRS" id="CCDC14">
    <property type="organism name" value="human"/>
</dbReference>
<dbReference type="GenomeRNAi" id="64770"/>
<dbReference type="Pharos" id="Q49A88">
    <property type="development level" value="Tdark"/>
</dbReference>
<dbReference type="PRO" id="PR:Q49A88"/>
<dbReference type="Proteomes" id="UP000005640">
    <property type="component" value="Chromosome 3"/>
</dbReference>
<dbReference type="RNAct" id="Q49A88">
    <property type="molecule type" value="protein"/>
</dbReference>
<dbReference type="Bgee" id="ENSG00000175455">
    <property type="expression patterns" value="Expressed in pancreatic ductal cell and 182 other cell types or tissues"/>
</dbReference>
<dbReference type="ExpressionAtlas" id="Q49A88">
    <property type="expression patterns" value="baseline and differential"/>
</dbReference>
<dbReference type="GO" id="GO:0034451">
    <property type="term" value="C:centriolar satellite"/>
    <property type="evidence" value="ECO:0000314"/>
    <property type="project" value="HPA"/>
</dbReference>
<dbReference type="GO" id="GO:0005813">
    <property type="term" value="C:centrosome"/>
    <property type="evidence" value="ECO:0000314"/>
    <property type="project" value="UniProtKB"/>
</dbReference>
<dbReference type="GO" id="GO:0036064">
    <property type="term" value="C:ciliary basal body"/>
    <property type="evidence" value="ECO:0000314"/>
    <property type="project" value="HPA"/>
</dbReference>
<dbReference type="GO" id="GO:0005929">
    <property type="term" value="C:cilium"/>
    <property type="evidence" value="ECO:0000314"/>
    <property type="project" value="HPA"/>
</dbReference>
<dbReference type="GO" id="GO:0005737">
    <property type="term" value="C:cytoplasm"/>
    <property type="evidence" value="ECO:0007669"/>
    <property type="project" value="UniProtKB-KW"/>
</dbReference>
<dbReference type="GO" id="GO:0015630">
    <property type="term" value="C:microtubule cytoskeleton"/>
    <property type="evidence" value="ECO:0000314"/>
    <property type="project" value="HPA"/>
</dbReference>
<dbReference type="GO" id="GO:0071539">
    <property type="term" value="P:protein localization to centrosome"/>
    <property type="evidence" value="ECO:0000315"/>
    <property type="project" value="UniProtKB"/>
</dbReference>
<dbReference type="GO" id="GO:0021762">
    <property type="term" value="P:substantia nigra development"/>
    <property type="evidence" value="ECO:0007007"/>
    <property type="project" value="UniProtKB"/>
</dbReference>
<dbReference type="InterPro" id="IPR029343">
    <property type="entry name" value="CCDC14"/>
</dbReference>
<dbReference type="PANTHER" id="PTHR22367">
    <property type="entry name" value="COILED-COIL DOMAIN-CONTAINING PROTEIN 14"/>
    <property type="match status" value="1"/>
</dbReference>
<dbReference type="PANTHER" id="PTHR22367:SF2">
    <property type="entry name" value="COILED-COIL DOMAIN-CONTAINING PROTEIN 14"/>
    <property type="match status" value="1"/>
</dbReference>
<dbReference type="Pfam" id="PF15254">
    <property type="entry name" value="CCDC14"/>
    <property type="match status" value="1"/>
</dbReference>
<sequence>MKRGIRRDPFRKRKLGGRAKKVREPTAVNSFYREASLPSVWASLRRREMVRSGARPGQVLSSGRHTGPAKLTNGKKATYLRKIPRFNADSGYSIHSDSESQAETVHGLDGCASLLRDILRNEDSGSETAYLENRSNSRPLESKRYGSKKKRHEKHTIPLVVQKETSSSDNKKQIPNEASARSERDTSDLEQNWSLQDHYRMYSPIIYQALCEHVQTQMSLMNDLTSKNIPNGIPAVPCHAPSHSESQATPHSSYGLCTSTPVWSLQRPPCPPKVHSEVQTDGNSQFASQGKTVSATCTDVLRNSFNTSPGVPCSLPKTDISAIPTLQQLGLVNGILPQQGIHKETDLLKCIQTYLSLFRSHGKETHLDSQTHRSPTQSQPAFLATNEEKCAREQIREATSERKDLNIHVRDTKTVKDVQKAKNVNKTAEKVRIIKYLLGELKALVAEQEDSEIQRLITEMEACISVLPTVSGNTDIQVEIALAMQPLRSENAQLRRQLRILNQQLREQQKTQKPSGAVDCNLELFSLQSLNMSLQNQLEESLKSQELLQSKNEELLKVIENQKDENKKFSSIFKDKDQTILENKQQYDIEITRIKIELEEALVNVKSSQFKLETAEKENQILGITLRQRDAEVTRLRELTRTLQTSMAKLLSDLSVDSARCKPGNNLTKSLLNIHDKQLQHDPAPAHTSIMSYLNKLETNYSFTHSEPLSTIKNEETIEPDKTYENVLSSRGPQNSNTRGMEEASAPGIISALSKQDSDEGSETMALIEDEHNLDNTIYIPFARSTPEKKSPLSKRLSPQPQIRAATTQLVSNSGLAVSGKENKLCTPVICSSSTKEAEDAPEKLSRASDMKDTQLLKKIKEAIGKIPAATKEPEEQTACHGPSGCLSNSLQVKGNTVCDGSVFTSDLMSDWSISSFSTFTSRDEQDFRNGLAALDANIARLQKSLRTGLLEK</sequence>
<name>CCD14_HUMAN</name>
<keyword id="KW-0025">Alternative splicing</keyword>
<keyword id="KW-0175">Coiled coil</keyword>
<keyword id="KW-0963">Cytoplasm</keyword>
<keyword id="KW-0206">Cytoskeleton</keyword>
<keyword id="KW-0597">Phosphoprotein</keyword>
<keyword id="KW-1267">Proteomics identification</keyword>
<keyword id="KW-1185">Reference proteome</keyword>
<reference key="1">
    <citation type="journal article" date="2007" name="BMC Genomics">
        <title>The full-ORF clone resource of the German cDNA consortium.</title>
        <authorList>
            <person name="Bechtel S."/>
            <person name="Rosenfelder H."/>
            <person name="Duda A."/>
            <person name="Schmidt C.P."/>
            <person name="Ernst U."/>
            <person name="Wellenreuther R."/>
            <person name="Mehrle A."/>
            <person name="Schuster C."/>
            <person name="Bahr A."/>
            <person name="Bloecker H."/>
            <person name="Heubner D."/>
            <person name="Hoerlein A."/>
            <person name="Michel G."/>
            <person name="Wedler H."/>
            <person name="Koehrer K."/>
            <person name="Ottenwaelder B."/>
            <person name="Poustka A."/>
            <person name="Wiemann S."/>
            <person name="Schupp I."/>
        </authorList>
    </citation>
    <scope>NUCLEOTIDE SEQUENCE [LARGE SCALE MRNA] (ISOFORMS 3 AND 4)</scope>
    <scope>NUCLEOTIDE SEQUENCE [LARGE SCALE MRNA] OF 537-953 (ISOFORMS 1/2/3/5/6)</scope>
    <scope>VARIANT PRO-365</scope>
    <source>
        <tissue>Bone marrow</tissue>
        <tissue>Retina</tissue>
        <tissue>Testis</tissue>
    </source>
</reference>
<reference key="2">
    <citation type="journal article" date="2004" name="Nat. Genet.">
        <title>Complete sequencing and characterization of 21,243 full-length human cDNAs.</title>
        <authorList>
            <person name="Ota T."/>
            <person name="Suzuki Y."/>
            <person name="Nishikawa T."/>
            <person name="Otsuki T."/>
            <person name="Sugiyama T."/>
            <person name="Irie R."/>
            <person name="Wakamatsu A."/>
            <person name="Hayashi K."/>
            <person name="Sato H."/>
            <person name="Nagai K."/>
            <person name="Kimura K."/>
            <person name="Makita H."/>
            <person name="Sekine M."/>
            <person name="Obayashi M."/>
            <person name="Nishi T."/>
            <person name="Shibahara T."/>
            <person name="Tanaka T."/>
            <person name="Ishii S."/>
            <person name="Yamamoto J."/>
            <person name="Saito K."/>
            <person name="Kawai Y."/>
            <person name="Isono Y."/>
            <person name="Nakamura Y."/>
            <person name="Nagahari K."/>
            <person name="Murakami K."/>
            <person name="Yasuda T."/>
            <person name="Iwayanagi T."/>
            <person name="Wagatsuma M."/>
            <person name="Shiratori A."/>
            <person name="Sudo H."/>
            <person name="Hosoiri T."/>
            <person name="Kaku Y."/>
            <person name="Kodaira H."/>
            <person name="Kondo H."/>
            <person name="Sugawara M."/>
            <person name="Takahashi M."/>
            <person name="Kanda K."/>
            <person name="Yokoi T."/>
            <person name="Furuya T."/>
            <person name="Kikkawa E."/>
            <person name="Omura Y."/>
            <person name="Abe K."/>
            <person name="Kamihara K."/>
            <person name="Katsuta N."/>
            <person name="Sato K."/>
            <person name="Tanikawa M."/>
            <person name="Yamazaki M."/>
            <person name="Ninomiya K."/>
            <person name="Ishibashi T."/>
            <person name="Yamashita H."/>
            <person name="Murakawa K."/>
            <person name="Fujimori K."/>
            <person name="Tanai H."/>
            <person name="Kimata M."/>
            <person name="Watanabe M."/>
            <person name="Hiraoka S."/>
            <person name="Chiba Y."/>
            <person name="Ishida S."/>
            <person name="Ono Y."/>
            <person name="Takiguchi S."/>
            <person name="Watanabe S."/>
            <person name="Yosida M."/>
            <person name="Hotuta T."/>
            <person name="Kusano J."/>
            <person name="Kanehori K."/>
            <person name="Takahashi-Fujii A."/>
            <person name="Hara H."/>
            <person name="Tanase T.-O."/>
            <person name="Nomura Y."/>
            <person name="Togiya S."/>
            <person name="Komai F."/>
            <person name="Hara R."/>
            <person name="Takeuchi K."/>
            <person name="Arita M."/>
            <person name="Imose N."/>
            <person name="Musashino K."/>
            <person name="Yuuki H."/>
            <person name="Oshima A."/>
            <person name="Sasaki N."/>
            <person name="Aotsuka S."/>
            <person name="Yoshikawa Y."/>
            <person name="Matsunawa H."/>
            <person name="Ichihara T."/>
            <person name="Shiohata N."/>
            <person name="Sano S."/>
            <person name="Moriya S."/>
            <person name="Momiyama H."/>
            <person name="Satoh N."/>
            <person name="Takami S."/>
            <person name="Terashima Y."/>
            <person name="Suzuki O."/>
            <person name="Nakagawa S."/>
            <person name="Senoh A."/>
            <person name="Mizoguchi H."/>
            <person name="Goto Y."/>
            <person name="Shimizu F."/>
            <person name="Wakebe H."/>
            <person name="Hishigaki H."/>
            <person name="Watanabe T."/>
            <person name="Sugiyama A."/>
            <person name="Takemoto M."/>
            <person name="Kawakami B."/>
            <person name="Yamazaki M."/>
            <person name="Watanabe K."/>
            <person name="Kumagai A."/>
            <person name="Itakura S."/>
            <person name="Fukuzumi Y."/>
            <person name="Fujimori Y."/>
            <person name="Komiyama M."/>
            <person name="Tashiro H."/>
            <person name="Tanigami A."/>
            <person name="Fujiwara T."/>
            <person name="Ono T."/>
            <person name="Yamada K."/>
            <person name="Fujii Y."/>
            <person name="Ozaki K."/>
            <person name="Hirao M."/>
            <person name="Ohmori Y."/>
            <person name="Kawabata A."/>
            <person name="Hikiji T."/>
            <person name="Kobatake N."/>
            <person name="Inagaki H."/>
            <person name="Ikema Y."/>
            <person name="Okamoto S."/>
            <person name="Okitani R."/>
            <person name="Kawakami T."/>
            <person name="Noguchi S."/>
            <person name="Itoh T."/>
            <person name="Shigeta K."/>
            <person name="Senba T."/>
            <person name="Matsumura K."/>
            <person name="Nakajima Y."/>
            <person name="Mizuno T."/>
            <person name="Morinaga M."/>
            <person name="Sasaki M."/>
            <person name="Togashi T."/>
            <person name="Oyama M."/>
            <person name="Hata H."/>
            <person name="Watanabe M."/>
            <person name="Komatsu T."/>
            <person name="Mizushima-Sugano J."/>
            <person name="Satoh T."/>
            <person name="Shirai Y."/>
            <person name="Takahashi Y."/>
            <person name="Nakagawa K."/>
            <person name="Okumura K."/>
            <person name="Nagase T."/>
            <person name="Nomura N."/>
            <person name="Kikuchi H."/>
            <person name="Masuho Y."/>
            <person name="Yamashita R."/>
            <person name="Nakai K."/>
            <person name="Yada T."/>
            <person name="Nakamura Y."/>
            <person name="Ohara O."/>
            <person name="Isogai T."/>
            <person name="Sugano S."/>
        </authorList>
    </citation>
    <scope>NUCLEOTIDE SEQUENCE [LARGE SCALE MRNA] (ISOFORM 6)</scope>
    <scope>NUCLEOTIDE SEQUENCE [LARGE SCALE MRNA] OF 20-953 (ISOFORM 1)</scope>
    <scope>NUCLEOTIDE SEQUENCE [LARGE SCALE MRNA] OF 153-953 (ISOFORM 5)</scope>
    <scope>NUCLEOTIDE SEQUENCE [LARGE SCALE MRNA] OF 584-953 (ISOFORMS 2/3/5/6)</scope>
    <scope>VARIANT PRO-365</scope>
    <source>
        <tissue>Brain</tissue>
        <tissue>Teratocarcinoma</tissue>
    </source>
</reference>
<reference key="3">
    <citation type="journal article" date="2006" name="Nature">
        <title>The DNA sequence, annotation and analysis of human chromosome 3.</title>
        <authorList>
            <person name="Muzny D.M."/>
            <person name="Scherer S.E."/>
            <person name="Kaul R."/>
            <person name="Wang J."/>
            <person name="Yu J."/>
            <person name="Sudbrak R."/>
            <person name="Buhay C.J."/>
            <person name="Chen R."/>
            <person name="Cree A."/>
            <person name="Ding Y."/>
            <person name="Dugan-Rocha S."/>
            <person name="Gill R."/>
            <person name="Gunaratne P."/>
            <person name="Harris R.A."/>
            <person name="Hawes A.C."/>
            <person name="Hernandez J."/>
            <person name="Hodgson A.V."/>
            <person name="Hume J."/>
            <person name="Jackson A."/>
            <person name="Khan Z.M."/>
            <person name="Kovar-Smith C."/>
            <person name="Lewis L.R."/>
            <person name="Lozado R.J."/>
            <person name="Metzker M.L."/>
            <person name="Milosavljevic A."/>
            <person name="Miner G.R."/>
            <person name="Morgan M.B."/>
            <person name="Nazareth L.V."/>
            <person name="Scott G."/>
            <person name="Sodergren E."/>
            <person name="Song X.-Z."/>
            <person name="Steffen D."/>
            <person name="Wei S."/>
            <person name="Wheeler D.A."/>
            <person name="Wright M.W."/>
            <person name="Worley K.C."/>
            <person name="Yuan Y."/>
            <person name="Zhang Z."/>
            <person name="Adams C.Q."/>
            <person name="Ansari-Lari M.A."/>
            <person name="Ayele M."/>
            <person name="Brown M.J."/>
            <person name="Chen G."/>
            <person name="Chen Z."/>
            <person name="Clendenning J."/>
            <person name="Clerc-Blankenburg K.P."/>
            <person name="Chen R."/>
            <person name="Chen Z."/>
            <person name="Davis C."/>
            <person name="Delgado O."/>
            <person name="Dinh H.H."/>
            <person name="Dong W."/>
            <person name="Draper H."/>
            <person name="Ernst S."/>
            <person name="Fu G."/>
            <person name="Gonzalez-Garay M.L."/>
            <person name="Garcia D.K."/>
            <person name="Gillett W."/>
            <person name="Gu J."/>
            <person name="Hao B."/>
            <person name="Haugen E."/>
            <person name="Havlak P."/>
            <person name="He X."/>
            <person name="Hennig S."/>
            <person name="Hu S."/>
            <person name="Huang W."/>
            <person name="Jackson L.R."/>
            <person name="Jacob L.S."/>
            <person name="Kelly S.H."/>
            <person name="Kube M."/>
            <person name="Levy R."/>
            <person name="Li Z."/>
            <person name="Liu B."/>
            <person name="Liu J."/>
            <person name="Liu W."/>
            <person name="Lu J."/>
            <person name="Maheshwari M."/>
            <person name="Nguyen B.-V."/>
            <person name="Okwuonu G.O."/>
            <person name="Palmeiri A."/>
            <person name="Pasternak S."/>
            <person name="Perez L.M."/>
            <person name="Phelps K.A."/>
            <person name="Plopper F.J."/>
            <person name="Qiang B."/>
            <person name="Raymond C."/>
            <person name="Rodriguez R."/>
            <person name="Saenphimmachak C."/>
            <person name="Santibanez J."/>
            <person name="Shen H."/>
            <person name="Shen Y."/>
            <person name="Subramanian S."/>
            <person name="Tabor P.E."/>
            <person name="Verduzco D."/>
            <person name="Waldron L."/>
            <person name="Wang J."/>
            <person name="Wang J."/>
            <person name="Wang Q."/>
            <person name="Williams G.A."/>
            <person name="Wong G.K.-S."/>
            <person name="Yao Z."/>
            <person name="Zhang J."/>
            <person name="Zhang X."/>
            <person name="Zhao G."/>
            <person name="Zhou J."/>
            <person name="Zhou Y."/>
            <person name="Nelson D."/>
            <person name="Lehrach H."/>
            <person name="Reinhardt R."/>
            <person name="Naylor S.L."/>
            <person name="Yang H."/>
            <person name="Olson M."/>
            <person name="Weinstock G."/>
            <person name="Gibbs R.A."/>
        </authorList>
    </citation>
    <scope>NUCLEOTIDE SEQUENCE [LARGE SCALE GENOMIC DNA]</scope>
</reference>
<reference key="4">
    <citation type="submission" date="2005-09" db="EMBL/GenBank/DDBJ databases">
        <authorList>
            <person name="Mural R.J."/>
            <person name="Istrail S."/>
            <person name="Sutton G.G."/>
            <person name="Florea L."/>
            <person name="Halpern A.L."/>
            <person name="Mobarry C.M."/>
            <person name="Lippert R."/>
            <person name="Walenz B."/>
            <person name="Shatkay H."/>
            <person name="Dew I."/>
            <person name="Miller J.R."/>
            <person name="Flanigan M.J."/>
            <person name="Edwards N.J."/>
            <person name="Bolanos R."/>
            <person name="Fasulo D."/>
            <person name="Halldorsson B.V."/>
            <person name="Hannenhalli S."/>
            <person name="Turner R."/>
            <person name="Yooseph S."/>
            <person name="Lu F."/>
            <person name="Nusskern D.R."/>
            <person name="Shue B.C."/>
            <person name="Zheng X.H."/>
            <person name="Zhong F."/>
            <person name="Delcher A.L."/>
            <person name="Huson D.H."/>
            <person name="Kravitz S.A."/>
            <person name="Mouchard L."/>
            <person name="Reinert K."/>
            <person name="Remington K.A."/>
            <person name="Clark A.G."/>
            <person name="Waterman M.S."/>
            <person name="Eichler E.E."/>
            <person name="Adams M.D."/>
            <person name="Hunkapiller M.W."/>
            <person name="Myers E.W."/>
            <person name="Venter J.C."/>
        </authorList>
    </citation>
    <scope>NUCLEOTIDE SEQUENCE [LARGE SCALE GENOMIC DNA]</scope>
</reference>
<reference key="5">
    <citation type="journal article" date="2004" name="Genome Res.">
        <title>The status, quality, and expansion of the NIH full-length cDNA project: the Mammalian Gene Collection (MGC).</title>
        <authorList>
            <consortium name="The MGC Project Team"/>
        </authorList>
    </citation>
    <scope>NUCLEOTIDE SEQUENCE [LARGE SCALE MRNA] (ISOFORM 2)</scope>
    <scope>NUCLEOTIDE SEQUENCE [LARGE SCALE MRNA] OF 743-953 (ISOFORM 1/2/3/5/6)</scope>
    <scope>VARIANT PRO-365</scope>
    <source>
        <tissue>Kidney</tissue>
        <tissue>Testis</tissue>
    </source>
</reference>
<reference key="6">
    <citation type="journal article" date="2009" name="Sci. Signal.">
        <title>Quantitative phosphoproteomic analysis of T cell receptor signaling reveals system-wide modulation of protein-protein interactions.</title>
        <authorList>
            <person name="Mayya V."/>
            <person name="Lundgren D.H."/>
            <person name="Hwang S.-I."/>
            <person name="Rezaul K."/>
            <person name="Wu L."/>
            <person name="Eng J.K."/>
            <person name="Rodionov V."/>
            <person name="Han D.K."/>
        </authorList>
    </citation>
    <scope>IDENTIFICATION BY MASS SPECTROMETRY [LARGE SCALE ANALYSIS]</scope>
    <source>
        <tissue>Leukemic T-cell</tissue>
    </source>
</reference>
<reference key="7">
    <citation type="journal article" date="2013" name="J. Proteome Res.">
        <title>Toward a comprehensive characterization of a human cancer cell phosphoproteome.</title>
        <authorList>
            <person name="Zhou H."/>
            <person name="Di Palma S."/>
            <person name="Preisinger C."/>
            <person name="Peng M."/>
            <person name="Polat A.N."/>
            <person name="Heck A.J."/>
            <person name="Mohammed S."/>
        </authorList>
    </citation>
    <scope>PHOSPHORYLATION [LARGE SCALE ANALYSIS] AT SER-124; SER-670; SER-754 AND SER-798</scope>
    <scope>IDENTIFICATION BY MASS SPECTROMETRY [LARGE SCALE ANALYSIS]</scope>
    <source>
        <tissue>Cervix carcinoma</tissue>
        <tissue>Erythroleukemia</tissue>
    </source>
</reference>
<reference key="8">
    <citation type="journal article" date="2014" name="Curr. Biol.">
        <title>Proximity interactions among centrosome components identify regulators of centriole duplication.</title>
        <authorList>
            <person name="Firat-Karalar E.N."/>
            <person name="Rauniyar N."/>
            <person name="Yates J.R. III"/>
            <person name="Stearns T."/>
        </authorList>
    </citation>
    <scope>FUNCTION</scope>
    <scope>INTERACTION WITH CEP63</scope>
    <scope>SUBCELLULAR LOCATION</scope>
</reference>
<reference key="9">
    <citation type="journal article" date="2015" name="Elife">
        <title>Centriolar satellites assemble centrosomal microcephaly proteins to recruit CDK2 and promote centriole duplication.</title>
        <authorList>
            <person name="Kodani A."/>
            <person name="Yu T.W."/>
            <person name="Johnson J.R."/>
            <person name="Jayaraman D."/>
            <person name="Johnson T.L."/>
            <person name="Al-Gazali L."/>
            <person name="Sztriha L."/>
            <person name="Partlow J.N."/>
            <person name="Kim H."/>
            <person name="Krup A.L."/>
            <person name="Dammermann A."/>
            <person name="Krogan N."/>
            <person name="Walsh C.A."/>
            <person name="Reiter J.F."/>
        </authorList>
    </citation>
    <scope>FUNCTION</scope>
    <scope>SUBCELLULAR LOCATION</scope>
</reference>
<organism>
    <name type="scientific">Homo sapiens</name>
    <name type="common">Human</name>
    <dbReference type="NCBI Taxonomy" id="9606"/>
    <lineage>
        <taxon>Eukaryota</taxon>
        <taxon>Metazoa</taxon>
        <taxon>Chordata</taxon>
        <taxon>Craniata</taxon>
        <taxon>Vertebrata</taxon>
        <taxon>Euteleostomi</taxon>
        <taxon>Mammalia</taxon>
        <taxon>Eutheria</taxon>
        <taxon>Euarchontoglires</taxon>
        <taxon>Primates</taxon>
        <taxon>Haplorrhini</taxon>
        <taxon>Catarrhini</taxon>
        <taxon>Hominidae</taxon>
        <taxon>Homo</taxon>
    </lineage>
</organism>
<gene>
    <name type="primary">CCDC14</name>
</gene>
<protein>
    <recommendedName>
        <fullName>Coiled-coil domain-containing protein 14</fullName>
    </recommendedName>
</protein>